<accession>A6W366</accession>
<keyword id="KW-0687">Ribonucleoprotein</keyword>
<keyword id="KW-0689">Ribosomal protein</keyword>
<organism>
    <name type="scientific">Marinomonas sp. (strain MWYL1)</name>
    <dbReference type="NCBI Taxonomy" id="400668"/>
    <lineage>
        <taxon>Bacteria</taxon>
        <taxon>Pseudomonadati</taxon>
        <taxon>Pseudomonadota</taxon>
        <taxon>Gammaproteobacteria</taxon>
        <taxon>Oceanospirillales</taxon>
        <taxon>Oceanospirillaceae</taxon>
        <taxon>Marinomonas</taxon>
    </lineage>
</organism>
<name>RL17_MARMS</name>
<reference key="1">
    <citation type="submission" date="2007-06" db="EMBL/GenBank/DDBJ databases">
        <title>Complete sequence of Marinomonas sp. MWYL1.</title>
        <authorList>
            <consortium name="US DOE Joint Genome Institute"/>
            <person name="Copeland A."/>
            <person name="Lucas S."/>
            <person name="Lapidus A."/>
            <person name="Barry K."/>
            <person name="Glavina del Rio T."/>
            <person name="Dalin E."/>
            <person name="Tice H."/>
            <person name="Pitluck S."/>
            <person name="Kiss H."/>
            <person name="Brettin T."/>
            <person name="Bruce D."/>
            <person name="Detter J.C."/>
            <person name="Han C."/>
            <person name="Schmutz J."/>
            <person name="Larimer F."/>
            <person name="Land M."/>
            <person name="Hauser L."/>
            <person name="Kyrpides N."/>
            <person name="Kim E."/>
            <person name="Johnston A.W.B."/>
            <person name="Todd J.D."/>
            <person name="Rogers R."/>
            <person name="Wexler M."/>
            <person name="Bond P.L."/>
            <person name="Li Y."/>
            <person name="Richardson P."/>
        </authorList>
    </citation>
    <scope>NUCLEOTIDE SEQUENCE [LARGE SCALE GENOMIC DNA]</scope>
    <source>
        <strain>MWYL1</strain>
    </source>
</reference>
<sequence>MRHRKSGRHLNRTSSHRKAMFKNMAASLFEHEVIKTTLPKAKELRRVAEPLITLAKVDSVANRRLAFARTRSKDAVGKLFSELGPRYQARPGGYVRILKCGFRSGDNAPMAYVELVDRPVAEAAE</sequence>
<evidence type="ECO:0000255" key="1">
    <source>
        <dbReference type="HAMAP-Rule" id="MF_01368"/>
    </source>
</evidence>
<evidence type="ECO:0000305" key="2"/>
<feature type="chain" id="PRO_1000087178" description="Large ribosomal subunit protein bL17">
    <location>
        <begin position="1"/>
        <end position="125"/>
    </location>
</feature>
<comment type="subunit">
    <text evidence="1">Part of the 50S ribosomal subunit. Contacts protein L32.</text>
</comment>
<comment type="similarity">
    <text evidence="1">Belongs to the bacterial ribosomal protein bL17 family.</text>
</comment>
<gene>
    <name evidence="1" type="primary">rplQ</name>
    <name type="ordered locus">Mmwyl1_4250</name>
</gene>
<protein>
    <recommendedName>
        <fullName evidence="1">Large ribosomal subunit protein bL17</fullName>
    </recommendedName>
    <alternativeName>
        <fullName evidence="2">50S ribosomal protein L17</fullName>
    </alternativeName>
</protein>
<proteinExistence type="inferred from homology"/>
<dbReference type="EMBL" id="CP000749">
    <property type="protein sequence ID" value="ABR73145.1"/>
    <property type="molecule type" value="Genomic_DNA"/>
</dbReference>
<dbReference type="SMR" id="A6W366"/>
<dbReference type="STRING" id="400668.Mmwyl1_4250"/>
<dbReference type="KEGG" id="mmw:Mmwyl1_4250"/>
<dbReference type="eggNOG" id="COG0203">
    <property type="taxonomic scope" value="Bacteria"/>
</dbReference>
<dbReference type="HOGENOM" id="CLU_074407_2_0_6"/>
<dbReference type="OrthoDB" id="9809073at2"/>
<dbReference type="GO" id="GO:0022625">
    <property type="term" value="C:cytosolic large ribosomal subunit"/>
    <property type="evidence" value="ECO:0007669"/>
    <property type="project" value="TreeGrafter"/>
</dbReference>
<dbReference type="GO" id="GO:0003735">
    <property type="term" value="F:structural constituent of ribosome"/>
    <property type="evidence" value="ECO:0007669"/>
    <property type="project" value="InterPro"/>
</dbReference>
<dbReference type="GO" id="GO:0006412">
    <property type="term" value="P:translation"/>
    <property type="evidence" value="ECO:0007669"/>
    <property type="project" value="UniProtKB-UniRule"/>
</dbReference>
<dbReference type="FunFam" id="3.90.1030.10:FF:000001">
    <property type="entry name" value="50S ribosomal protein L17"/>
    <property type="match status" value="1"/>
</dbReference>
<dbReference type="Gene3D" id="3.90.1030.10">
    <property type="entry name" value="Ribosomal protein L17"/>
    <property type="match status" value="1"/>
</dbReference>
<dbReference type="HAMAP" id="MF_01368">
    <property type="entry name" value="Ribosomal_bL17"/>
    <property type="match status" value="1"/>
</dbReference>
<dbReference type="InterPro" id="IPR000456">
    <property type="entry name" value="Ribosomal_bL17"/>
</dbReference>
<dbReference type="InterPro" id="IPR047859">
    <property type="entry name" value="Ribosomal_bL17_CS"/>
</dbReference>
<dbReference type="InterPro" id="IPR036373">
    <property type="entry name" value="Ribosomal_bL17_sf"/>
</dbReference>
<dbReference type="NCBIfam" id="TIGR00059">
    <property type="entry name" value="L17"/>
    <property type="match status" value="1"/>
</dbReference>
<dbReference type="PANTHER" id="PTHR14413:SF16">
    <property type="entry name" value="LARGE RIBOSOMAL SUBUNIT PROTEIN BL17M"/>
    <property type="match status" value="1"/>
</dbReference>
<dbReference type="PANTHER" id="PTHR14413">
    <property type="entry name" value="RIBOSOMAL PROTEIN L17"/>
    <property type="match status" value="1"/>
</dbReference>
<dbReference type="Pfam" id="PF01196">
    <property type="entry name" value="Ribosomal_L17"/>
    <property type="match status" value="1"/>
</dbReference>
<dbReference type="SUPFAM" id="SSF64263">
    <property type="entry name" value="Prokaryotic ribosomal protein L17"/>
    <property type="match status" value="1"/>
</dbReference>
<dbReference type="PROSITE" id="PS01167">
    <property type="entry name" value="RIBOSOMAL_L17"/>
    <property type="match status" value="1"/>
</dbReference>